<feature type="chain" id="PRO_0000198165" description="Ribosomal RNA large subunit methyltransferase H">
    <location>
        <begin position="1"/>
        <end position="155"/>
    </location>
</feature>
<feature type="binding site" evidence="1">
    <location>
        <position position="73"/>
    </location>
    <ligand>
        <name>S-adenosyl-L-methionine</name>
        <dbReference type="ChEBI" id="CHEBI:59789"/>
    </ligand>
</feature>
<feature type="binding site" evidence="1">
    <location>
        <position position="104"/>
    </location>
    <ligand>
        <name>S-adenosyl-L-methionine</name>
        <dbReference type="ChEBI" id="CHEBI:59789"/>
    </ligand>
</feature>
<feature type="binding site" evidence="1">
    <location>
        <begin position="123"/>
        <end position="128"/>
    </location>
    <ligand>
        <name>S-adenosyl-L-methionine</name>
        <dbReference type="ChEBI" id="CHEBI:59789"/>
    </ligand>
</feature>
<organism>
    <name type="scientific">Pseudomonas syringae pv. tomato (strain ATCC BAA-871 / DC3000)</name>
    <dbReference type="NCBI Taxonomy" id="223283"/>
    <lineage>
        <taxon>Bacteria</taxon>
        <taxon>Pseudomonadati</taxon>
        <taxon>Pseudomonadota</taxon>
        <taxon>Gammaproteobacteria</taxon>
        <taxon>Pseudomonadales</taxon>
        <taxon>Pseudomonadaceae</taxon>
        <taxon>Pseudomonas</taxon>
    </lineage>
</organism>
<keyword id="KW-0963">Cytoplasm</keyword>
<keyword id="KW-0489">Methyltransferase</keyword>
<keyword id="KW-1185">Reference proteome</keyword>
<keyword id="KW-0698">rRNA processing</keyword>
<keyword id="KW-0949">S-adenosyl-L-methionine</keyword>
<keyword id="KW-0808">Transferase</keyword>
<accession>Q87VV9</accession>
<reference key="1">
    <citation type="journal article" date="2003" name="Proc. Natl. Acad. Sci. U.S.A.">
        <title>The complete genome sequence of the Arabidopsis and tomato pathogen Pseudomonas syringae pv. tomato DC3000.</title>
        <authorList>
            <person name="Buell C.R."/>
            <person name="Joardar V."/>
            <person name="Lindeberg M."/>
            <person name="Selengut J."/>
            <person name="Paulsen I.T."/>
            <person name="Gwinn M.L."/>
            <person name="Dodson R.J."/>
            <person name="DeBoy R.T."/>
            <person name="Durkin A.S."/>
            <person name="Kolonay J.F."/>
            <person name="Madupu R."/>
            <person name="Daugherty S.C."/>
            <person name="Brinkac L.M."/>
            <person name="Beanan M.J."/>
            <person name="Haft D.H."/>
            <person name="Nelson W.C."/>
            <person name="Davidsen T.M."/>
            <person name="Zafar N."/>
            <person name="Zhou L."/>
            <person name="Liu J."/>
            <person name="Yuan Q."/>
            <person name="Khouri H.M."/>
            <person name="Fedorova N.B."/>
            <person name="Tran B."/>
            <person name="Russell D."/>
            <person name="Berry K.J."/>
            <person name="Utterback T.R."/>
            <person name="Van Aken S.E."/>
            <person name="Feldblyum T.V."/>
            <person name="D'Ascenzo M."/>
            <person name="Deng W.-L."/>
            <person name="Ramos A.R."/>
            <person name="Alfano J.R."/>
            <person name="Cartinhour S."/>
            <person name="Chatterjee A.K."/>
            <person name="Delaney T.P."/>
            <person name="Lazarowitz S.G."/>
            <person name="Martin G.B."/>
            <person name="Schneider D.J."/>
            <person name="Tang X."/>
            <person name="Bender C.L."/>
            <person name="White O."/>
            <person name="Fraser C.M."/>
            <person name="Collmer A."/>
        </authorList>
    </citation>
    <scope>NUCLEOTIDE SEQUENCE [LARGE SCALE GENOMIC DNA]</scope>
    <source>
        <strain>ATCC BAA-871 / DC3000</strain>
    </source>
</reference>
<protein>
    <recommendedName>
        <fullName evidence="1">Ribosomal RNA large subunit methyltransferase H</fullName>
        <ecNumber evidence="1">2.1.1.177</ecNumber>
    </recommendedName>
    <alternativeName>
        <fullName evidence="1">23S rRNA (pseudouridine1915-N3)-methyltransferase</fullName>
    </alternativeName>
    <alternativeName>
        <fullName evidence="1">23S rRNA m3Psi1915 methyltransferase</fullName>
    </alternativeName>
    <alternativeName>
        <fullName evidence="1">rRNA (pseudouridine-N3-)-methyltransferase RlmH</fullName>
    </alternativeName>
</protein>
<name>RLMH_PSESM</name>
<proteinExistence type="inferred from homology"/>
<gene>
    <name evidence="1" type="primary">rlmH</name>
    <name type="ordered locus">PSPTO_4826</name>
</gene>
<comment type="function">
    <text evidence="1">Specifically methylates the pseudouridine at position 1915 (m3Psi1915) in 23S rRNA.</text>
</comment>
<comment type="catalytic activity">
    <reaction evidence="1">
        <text>pseudouridine(1915) in 23S rRNA + S-adenosyl-L-methionine = N(3)-methylpseudouridine(1915) in 23S rRNA + S-adenosyl-L-homocysteine + H(+)</text>
        <dbReference type="Rhea" id="RHEA:42752"/>
        <dbReference type="Rhea" id="RHEA-COMP:10221"/>
        <dbReference type="Rhea" id="RHEA-COMP:10222"/>
        <dbReference type="ChEBI" id="CHEBI:15378"/>
        <dbReference type="ChEBI" id="CHEBI:57856"/>
        <dbReference type="ChEBI" id="CHEBI:59789"/>
        <dbReference type="ChEBI" id="CHEBI:65314"/>
        <dbReference type="ChEBI" id="CHEBI:74486"/>
        <dbReference type="EC" id="2.1.1.177"/>
    </reaction>
</comment>
<comment type="subunit">
    <text evidence="1">Homodimer.</text>
</comment>
<comment type="subcellular location">
    <subcellularLocation>
        <location evidence="1">Cytoplasm</location>
    </subcellularLocation>
</comment>
<comment type="similarity">
    <text evidence="1">Belongs to the RNA methyltransferase RlmH family.</text>
</comment>
<sequence>MRLRLIAVGSRMPKWVEEGWHEYAKRMPSELALELVEIPLNTRGKNADVARFIRQEGEAMLAKVQPGERIVTLEVQGKPWSTEQLAVELDRWRLDARTVNLMVGGPEGLAPEVCARSEQRWSLSPLTLPHPLVRILIGEQMYRAWTVLSGHPYHK</sequence>
<dbReference type="EC" id="2.1.1.177" evidence="1"/>
<dbReference type="EMBL" id="AE016853">
    <property type="protein sequence ID" value="AAO58255.1"/>
    <property type="molecule type" value="Genomic_DNA"/>
</dbReference>
<dbReference type="RefSeq" id="NP_794560.1">
    <property type="nucleotide sequence ID" value="NC_004578.1"/>
</dbReference>
<dbReference type="RefSeq" id="WP_003313894.1">
    <property type="nucleotide sequence ID" value="NC_004578.1"/>
</dbReference>
<dbReference type="SMR" id="Q87VV9"/>
<dbReference type="STRING" id="223283.PSPTO_4826"/>
<dbReference type="GeneID" id="77280210"/>
<dbReference type="KEGG" id="pst:PSPTO_4826"/>
<dbReference type="PATRIC" id="fig|223283.9.peg.4938"/>
<dbReference type="eggNOG" id="COG1576">
    <property type="taxonomic scope" value="Bacteria"/>
</dbReference>
<dbReference type="HOGENOM" id="CLU_100552_1_0_6"/>
<dbReference type="OrthoDB" id="9806643at2"/>
<dbReference type="PhylomeDB" id="Q87VV9"/>
<dbReference type="Proteomes" id="UP000002515">
    <property type="component" value="Chromosome"/>
</dbReference>
<dbReference type="GO" id="GO:0005737">
    <property type="term" value="C:cytoplasm"/>
    <property type="evidence" value="ECO:0007669"/>
    <property type="project" value="UniProtKB-SubCell"/>
</dbReference>
<dbReference type="GO" id="GO:0070038">
    <property type="term" value="F:rRNA (pseudouridine-N3-)-methyltransferase activity"/>
    <property type="evidence" value="ECO:0007669"/>
    <property type="project" value="UniProtKB-UniRule"/>
</dbReference>
<dbReference type="CDD" id="cd18081">
    <property type="entry name" value="RlmH-like"/>
    <property type="match status" value="1"/>
</dbReference>
<dbReference type="Gene3D" id="3.40.1280.10">
    <property type="match status" value="1"/>
</dbReference>
<dbReference type="HAMAP" id="MF_00658">
    <property type="entry name" value="23SrRNA_methyltr_H"/>
    <property type="match status" value="1"/>
</dbReference>
<dbReference type="InterPro" id="IPR029028">
    <property type="entry name" value="Alpha/beta_knot_MTases"/>
</dbReference>
<dbReference type="InterPro" id="IPR003742">
    <property type="entry name" value="RlmH-like"/>
</dbReference>
<dbReference type="InterPro" id="IPR029026">
    <property type="entry name" value="tRNA_m1G_MTases_N"/>
</dbReference>
<dbReference type="NCBIfam" id="NF000986">
    <property type="entry name" value="PRK00103.1-4"/>
    <property type="match status" value="1"/>
</dbReference>
<dbReference type="NCBIfam" id="TIGR00246">
    <property type="entry name" value="tRNA_RlmH_YbeA"/>
    <property type="match status" value="1"/>
</dbReference>
<dbReference type="PANTHER" id="PTHR33603">
    <property type="entry name" value="METHYLTRANSFERASE"/>
    <property type="match status" value="1"/>
</dbReference>
<dbReference type="PANTHER" id="PTHR33603:SF1">
    <property type="entry name" value="RIBOSOMAL RNA LARGE SUBUNIT METHYLTRANSFERASE H"/>
    <property type="match status" value="1"/>
</dbReference>
<dbReference type="Pfam" id="PF02590">
    <property type="entry name" value="SPOUT_MTase"/>
    <property type="match status" value="1"/>
</dbReference>
<dbReference type="PIRSF" id="PIRSF004505">
    <property type="entry name" value="MT_bac"/>
    <property type="match status" value="1"/>
</dbReference>
<dbReference type="SUPFAM" id="SSF75217">
    <property type="entry name" value="alpha/beta knot"/>
    <property type="match status" value="1"/>
</dbReference>
<evidence type="ECO:0000255" key="1">
    <source>
        <dbReference type="HAMAP-Rule" id="MF_00658"/>
    </source>
</evidence>